<proteinExistence type="evidence at protein level"/>
<protein>
    <recommendedName>
        <fullName>Stress-activated protein kinase JNK</fullName>
        <shortName>dJNK</shortName>
        <ecNumber>2.7.11.24</ecNumber>
    </recommendedName>
    <alternativeName>
        <fullName>Protein basket</fullName>
    </alternativeName>
</protein>
<dbReference type="EC" id="2.7.11.24"/>
<dbReference type="EMBL" id="U50965">
    <property type="protein sequence ID" value="AAB51187.1"/>
    <property type="molecule type" value="Genomic_DNA"/>
</dbReference>
<dbReference type="EMBL" id="U50966">
    <property type="protein sequence ID" value="AAB51188.1"/>
    <property type="molecule type" value="Genomic_DNA"/>
</dbReference>
<dbReference type="EMBL" id="U49180">
    <property type="protein sequence ID" value="AAB97094.1"/>
    <property type="molecule type" value="mRNA"/>
</dbReference>
<dbReference type="EMBL" id="U49249">
    <property type="protein sequence ID" value="AAB48381.1"/>
    <property type="molecule type" value="Genomic_DNA"/>
</dbReference>
<dbReference type="EMBL" id="U73196">
    <property type="protein sequence ID" value="AAC47325.1"/>
    <property type="status" value="ALT_FRAME"/>
    <property type="molecule type" value="mRNA"/>
</dbReference>
<dbReference type="EMBL" id="AE014134">
    <property type="protein sequence ID" value="AAF52883.1"/>
    <property type="molecule type" value="Genomic_DNA"/>
</dbReference>
<dbReference type="EMBL" id="AY122221">
    <property type="protein sequence ID" value="AAM52733.1"/>
    <property type="molecule type" value="mRNA"/>
</dbReference>
<dbReference type="EMBL" id="AY070865">
    <property type="protein sequence ID" value="AAL48487.1"/>
    <property type="molecule type" value="mRNA"/>
</dbReference>
<dbReference type="RefSeq" id="NP_001162930.1">
    <property type="nucleotide sequence ID" value="NM_001169459.1"/>
</dbReference>
<dbReference type="RefSeq" id="NP_001162932.1">
    <property type="nucleotide sequence ID" value="NM_001169461.3"/>
</dbReference>
<dbReference type="RefSeq" id="NP_723541.1">
    <property type="nucleotide sequence ID" value="NM_164900.3"/>
</dbReference>
<dbReference type="PDB" id="5AWM">
    <property type="method" value="X-ray"/>
    <property type="resolution" value="1.79 A"/>
    <property type="chains" value="A=1-372"/>
</dbReference>
<dbReference type="PDBsum" id="5AWM"/>
<dbReference type="SMR" id="P92208"/>
<dbReference type="BioGRID" id="69288">
    <property type="interactions" value="143"/>
</dbReference>
<dbReference type="DIP" id="DIP-17307N"/>
<dbReference type="FunCoup" id="P92208">
    <property type="interactions" value="1221"/>
</dbReference>
<dbReference type="IntAct" id="P92208">
    <property type="interactions" value="18"/>
</dbReference>
<dbReference type="STRING" id="7227.FBpp0291573"/>
<dbReference type="iPTMnet" id="P92208"/>
<dbReference type="PaxDb" id="7227-FBpp0079676"/>
<dbReference type="DNASU" id="44801"/>
<dbReference type="EnsemblMetazoa" id="FBtr0080087">
    <property type="protein sequence ID" value="FBpp0079676"/>
    <property type="gene ID" value="FBgn0000229"/>
</dbReference>
<dbReference type="EnsemblMetazoa" id="FBtr0300982">
    <property type="protein sequence ID" value="FBpp0290204"/>
    <property type="gene ID" value="FBgn0000229"/>
</dbReference>
<dbReference type="EnsemblMetazoa" id="FBtr0302378">
    <property type="protein sequence ID" value="FBpp0291573"/>
    <property type="gene ID" value="FBgn0000229"/>
</dbReference>
<dbReference type="GeneID" id="44801"/>
<dbReference type="KEGG" id="dme:Dmel_CG5680"/>
<dbReference type="AGR" id="FB:FBgn0000229"/>
<dbReference type="CTD" id="44801"/>
<dbReference type="FlyBase" id="FBgn0000229">
    <property type="gene designation" value="bsk"/>
</dbReference>
<dbReference type="VEuPathDB" id="VectorBase:FBgn0000229"/>
<dbReference type="eggNOG" id="KOG0665">
    <property type="taxonomic scope" value="Eukaryota"/>
</dbReference>
<dbReference type="GeneTree" id="ENSGT00940000169409"/>
<dbReference type="HOGENOM" id="CLU_000288_181_1_1"/>
<dbReference type="InParanoid" id="P92208"/>
<dbReference type="OMA" id="QGHAFES"/>
<dbReference type="OrthoDB" id="192887at2759"/>
<dbReference type="PhylomeDB" id="P92208"/>
<dbReference type="BRENDA" id="2.7.11.24">
    <property type="organism ID" value="1994"/>
</dbReference>
<dbReference type="Reactome" id="R-DME-193648">
    <property type="pathway name" value="NRAGE signals death through JNK"/>
</dbReference>
<dbReference type="Reactome" id="R-DME-209397">
    <property type="pathway name" value="Formation of the cytosolic BSK 'scaffolding complex'"/>
</dbReference>
<dbReference type="Reactome" id="R-DME-209409">
    <property type="pathway name" value="Formation of the nuclear AP-1 transcription factor 'scaffolding complex'"/>
</dbReference>
<dbReference type="Reactome" id="R-DME-209425">
    <property type="pathway name" value="Transcriptional activtion by AP-1 transcription factor"/>
</dbReference>
<dbReference type="Reactome" id="R-DME-209459">
    <property type="pathway name" value="Imd pathway"/>
</dbReference>
<dbReference type="Reactome" id="R-DME-2559580">
    <property type="pathway name" value="Oxidative Stress Induced Senescence"/>
</dbReference>
<dbReference type="Reactome" id="R-DME-2871796">
    <property type="pathway name" value="FCERI mediated MAPK activation"/>
</dbReference>
<dbReference type="Reactome" id="R-DME-450321">
    <property type="pathway name" value="JNK (c-Jun kinases) phosphorylation and activation mediated by activated human TAK1"/>
</dbReference>
<dbReference type="Reactome" id="R-DME-450341">
    <property type="pathway name" value="Activation of the AP-1 family of transcription factors"/>
</dbReference>
<dbReference type="Reactome" id="R-DME-9007892">
    <property type="pathway name" value="Interleukin-38 signaling"/>
</dbReference>
<dbReference type="SignaLink" id="P92208"/>
<dbReference type="BioGRID-ORCS" id="44801">
    <property type="hits" value="0 hits in 3 CRISPR screens"/>
</dbReference>
<dbReference type="EvolutionaryTrace" id="P92208"/>
<dbReference type="GenomeRNAi" id="44801"/>
<dbReference type="PRO" id="PR:P92208"/>
<dbReference type="Proteomes" id="UP000000803">
    <property type="component" value="Chromosome 2L"/>
</dbReference>
<dbReference type="Bgee" id="FBgn0000229">
    <property type="expression patterns" value="Expressed in T neuron T4a (Drosophila) in embryonic/larval optic lobe (Drosophila) and 265 other cell types or tissues"/>
</dbReference>
<dbReference type="ExpressionAtlas" id="P92208">
    <property type="expression patterns" value="baseline and differential"/>
</dbReference>
<dbReference type="GO" id="GO:0030424">
    <property type="term" value="C:axon"/>
    <property type="evidence" value="ECO:0000314"/>
    <property type="project" value="FlyBase"/>
</dbReference>
<dbReference type="GO" id="GO:0005737">
    <property type="term" value="C:cytoplasm"/>
    <property type="evidence" value="ECO:0000318"/>
    <property type="project" value="GO_Central"/>
</dbReference>
<dbReference type="GO" id="GO:0005829">
    <property type="term" value="C:cytosol"/>
    <property type="evidence" value="ECO:0000304"/>
    <property type="project" value="Reactome"/>
</dbReference>
<dbReference type="GO" id="GO:0030425">
    <property type="term" value="C:dendrite"/>
    <property type="evidence" value="ECO:0000314"/>
    <property type="project" value="FlyBase"/>
</dbReference>
<dbReference type="GO" id="GO:0005654">
    <property type="term" value="C:nucleoplasm"/>
    <property type="evidence" value="ECO:0000304"/>
    <property type="project" value="Reactome"/>
</dbReference>
<dbReference type="GO" id="GO:0005634">
    <property type="term" value="C:nucleus"/>
    <property type="evidence" value="ECO:0000314"/>
    <property type="project" value="UniProtKB"/>
</dbReference>
<dbReference type="GO" id="GO:0005524">
    <property type="term" value="F:ATP binding"/>
    <property type="evidence" value="ECO:0007669"/>
    <property type="project" value="UniProtKB-KW"/>
</dbReference>
<dbReference type="GO" id="GO:0004705">
    <property type="term" value="F:JUN kinase activity"/>
    <property type="evidence" value="ECO:0000314"/>
    <property type="project" value="UniProtKB"/>
</dbReference>
<dbReference type="GO" id="GO:0004672">
    <property type="term" value="F:protein kinase activity"/>
    <property type="evidence" value="ECO:0000314"/>
    <property type="project" value="FlyBase"/>
</dbReference>
<dbReference type="GO" id="GO:0106310">
    <property type="term" value="F:protein serine kinase activity"/>
    <property type="evidence" value="ECO:0007669"/>
    <property type="project" value="RHEA"/>
</dbReference>
<dbReference type="GO" id="GO:0004674">
    <property type="term" value="F:protein serine/threonine kinase activity"/>
    <property type="evidence" value="ECO:0000304"/>
    <property type="project" value="Reactome"/>
</dbReference>
<dbReference type="GO" id="GO:0019731">
    <property type="term" value="P:antibacterial humoral response"/>
    <property type="evidence" value="ECO:0000314"/>
    <property type="project" value="FlyBase"/>
</dbReference>
<dbReference type="GO" id="GO:0048675">
    <property type="term" value="P:axon extension"/>
    <property type="evidence" value="ECO:0000315"/>
    <property type="project" value="FlyBase"/>
</dbReference>
<dbReference type="GO" id="GO:0007411">
    <property type="term" value="P:axon guidance"/>
    <property type="evidence" value="ECO:0000314"/>
    <property type="project" value="FlyBase"/>
</dbReference>
<dbReference type="GO" id="GO:0071243">
    <property type="term" value="P:cellular response to arsenic-containing substance"/>
    <property type="evidence" value="ECO:0000314"/>
    <property type="project" value="FlyBase"/>
</dbReference>
<dbReference type="GO" id="GO:0071276">
    <property type="term" value="P:cellular response to cadmium ion"/>
    <property type="evidence" value="ECO:0000314"/>
    <property type="project" value="FlyBase"/>
</dbReference>
<dbReference type="GO" id="GO:0034599">
    <property type="term" value="P:cellular response to oxidative stress"/>
    <property type="evidence" value="ECO:0000315"/>
    <property type="project" value="FlyBase"/>
</dbReference>
<dbReference type="GO" id="GO:0034614">
    <property type="term" value="P:cellular response to reactive oxygen species"/>
    <property type="evidence" value="ECO:0000314"/>
    <property type="project" value="FlyBase"/>
</dbReference>
<dbReference type="GO" id="GO:0046844">
    <property type="term" value="P:chorion micropyle formation"/>
    <property type="evidence" value="ECO:0000315"/>
    <property type="project" value="FlyBase"/>
</dbReference>
<dbReference type="GO" id="GO:0048674">
    <property type="term" value="P:collateral sprouting of injured axon"/>
    <property type="evidence" value="ECO:0000315"/>
    <property type="project" value="FlyBase"/>
</dbReference>
<dbReference type="GO" id="GO:0050829">
    <property type="term" value="P:defense response to Gram-negative bacterium"/>
    <property type="evidence" value="ECO:0000316"/>
    <property type="project" value="FlyBase"/>
</dbReference>
<dbReference type="GO" id="GO:0071907">
    <property type="term" value="P:determination of digestive tract left/right asymmetry"/>
    <property type="evidence" value="ECO:0000316"/>
    <property type="project" value="FlyBase"/>
</dbReference>
<dbReference type="GO" id="GO:0046843">
    <property type="term" value="P:dorsal appendage formation"/>
    <property type="evidence" value="ECO:0000315"/>
    <property type="project" value="FlyBase"/>
</dbReference>
<dbReference type="GO" id="GO:0007391">
    <property type="term" value="P:dorsal closure"/>
    <property type="evidence" value="ECO:0000315"/>
    <property type="project" value="FlyBase"/>
</dbReference>
<dbReference type="GO" id="GO:0007395">
    <property type="term" value="P:dorsal closure, spreading of leading edge cells"/>
    <property type="evidence" value="ECO:0000315"/>
    <property type="project" value="UniProtKB"/>
</dbReference>
<dbReference type="GO" id="GO:0048615">
    <property type="term" value="P:embryonic anterior midgut (ectodermal) morphogenesis"/>
    <property type="evidence" value="ECO:0000316"/>
    <property type="project" value="FlyBase"/>
</dbReference>
<dbReference type="GO" id="GO:0043652">
    <property type="term" value="P:engulfment of apoptotic cell"/>
    <property type="evidence" value="ECO:0000315"/>
    <property type="project" value="FlyBase"/>
</dbReference>
<dbReference type="GO" id="GO:0071963">
    <property type="term" value="P:establishment or maintenance of cell polarity regulating cell shape"/>
    <property type="evidence" value="ECO:0000315"/>
    <property type="project" value="UniProtKB"/>
</dbReference>
<dbReference type="GO" id="GO:0030707">
    <property type="term" value="P:follicle cell of egg chamber development"/>
    <property type="evidence" value="ECO:0000315"/>
    <property type="project" value="FlyBase"/>
</dbReference>
<dbReference type="GO" id="GO:0046529">
    <property type="term" value="P:imaginal disc fusion, thorax closure"/>
    <property type="evidence" value="ECO:0000315"/>
    <property type="project" value="FlyBase"/>
</dbReference>
<dbReference type="GO" id="GO:0048803">
    <property type="term" value="P:imaginal disc-derived male genitalia morphogenesis"/>
    <property type="evidence" value="ECO:0000315"/>
    <property type="project" value="FlyBase"/>
</dbReference>
<dbReference type="GO" id="GO:0007254">
    <property type="term" value="P:JNK cascade"/>
    <property type="evidence" value="ECO:0000314"/>
    <property type="project" value="UniProtKB"/>
</dbReference>
<dbReference type="GO" id="GO:0007616">
    <property type="term" value="P:long-term memory"/>
    <property type="evidence" value="ECO:0000316"/>
    <property type="project" value="FlyBase"/>
</dbReference>
<dbReference type="GO" id="GO:0035006">
    <property type="term" value="P:melanization defense response"/>
    <property type="evidence" value="ECO:0000315"/>
    <property type="project" value="FlyBase"/>
</dbReference>
<dbReference type="GO" id="GO:0016319">
    <property type="term" value="P:mushroom body development"/>
    <property type="evidence" value="ECO:0000315"/>
    <property type="project" value="FlyBase"/>
</dbReference>
<dbReference type="GO" id="GO:0048666">
    <property type="term" value="P:neuron development"/>
    <property type="evidence" value="ECO:0000315"/>
    <property type="project" value="FlyBase"/>
</dbReference>
<dbReference type="GO" id="GO:0048812">
    <property type="term" value="P:neuron projection morphogenesis"/>
    <property type="evidence" value="ECO:0000315"/>
    <property type="project" value="FlyBase"/>
</dbReference>
<dbReference type="GO" id="GO:0061057">
    <property type="term" value="P:peptidoglycan recognition protein signaling pathway"/>
    <property type="evidence" value="ECO:0000315"/>
    <property type="project" value="FlyBase"/>
</dbReference>
<dbReference type="GO" id="GO:0043065">
    <property type="term" value="P:positive regulation of apoptotic process"/>
    <property type="evidence" value="ECO:0000316"/>
    <property type="project" value="FlyBase"/>
</dbReference>
<dbReference type="GO" id="GO:0010508">
    <property type="term" value="P:positive regulation of autophagy"/>
    <property type="evidence" value="ECO:0000315"/>
    <property type="project" value="FlyBase"/>
</dbReference>
<dbReference type="GO" id="GO:1903688">
    <property type="term" value="P:positive regulation of border follicle cell migration"/>
    <property type="evidence" value="ECO:0000315"/>
    <property type="project" value="UniProtKB"/>
</dbReference>
<dbReference type="GO" id="GO:0008284">
    <property type="term" value="P:positive regulation of cell population proliferation"/>
    <property type="evidence" value="ECO:0000315"/>
    <property type="project" value="UniProtKB"/>
</dbReference>
<dbReference type="GO" id="GO:0010628">
    <property type="term" value="P:positive regulation of gene expression"/>
    <property type="evidence" value="ECO:0000315"/>
    <property type="project" value="UniProtKB"/>
</dbReference>
<dbReference type="GO" id="GO:1904801">
    <property type="term" value="P:positive regulation of neuron remodeling"/>
    <property type="evidence" value="ECO:0000315"/>
    <property type="project" value="FlyBase"/>
</dbReference>
<dbReference type="GO" id="GO:0043068">
    <property type="term" value="P:positive regulation of programmed cell death"/>
    <property type="evidence" value="ECO:0000316"/>
    <property type="project" value="FlyBase"/>
</dbReference>
<dbReference type="GO" id="GO:0140255">
    <property type="term" value="P:regulation of cellular response to phosphate starvation"/>
    <property type="evidence" value="ECO:0000316"/>
    <property type="project" value="UniProtKB"/>
</dbReference>
<dbReference type="GO" id="GO:1903689">
    <property type="term" value="P:regulation of wound healing, spreading of epidermal cells"/>
    <property type="evidence" value="ECO:0000315"/>
    <property type="project" value="UniProtKB"/>
</dbReference>
<dbReference type="GO" id="GO:0009408">
    <property type="term" value="P:response to heat"/>
    <property type="evidence" value="ECO:0000315"/>
    <property type="project" value="FlyBase"/>
</dbReference>
<dbReference type="GO" id="GO:0006979">
    <property type="term" value="P:response to oxidative stress"/>
    <property type="evidence" value="ECO:0000315"/>
    <property type="project" value="FlyBase"/>
</dbReference>
<dbReference type="GO" id="GO:0033209">
    <property type="term" value="P:tumor necrosis factor-mediated signaling pathway"/>
    <property type="evidence" value="ECO:0000316"/>
    <property type="project" value="FlyBase"/>
</dbReference>
<dbReference type="GO" id="GO:0048010">
    <property type="term" value="P:vascular endothelial growth factor receptor signaling pathway"/>
    <property type="evidence" value="ECO:0000314"/>
    <property type="project" value="FlyBase"/>
</dbReference>
<dbReference type="GO" id="GO:0042060">
    <property type="term" value="P:wound healing"/>
    <property type="evidence" value="ECO:0000314"/>
    <property type="project" value="UniProtKB"/>
</dbReference>
<dbReference type="GO" id="GO:0035313">
    <property type="term" value="P:wound healing, spreading of epidermal cells"/>
    <property type="evidence" value="ECO:0000315"/>
    <property type="project" value="FlyBase"/>
</dbReference>
<dbReference type="CDD" id="cd07850">
    <property type="entry name" value="STKc_JNK"/>
    <property type="match status" value="1"/>
</dbReference>
<dbReference type="FunFam" id="1.10.510.10:FF:000009">
    <property type="entry name" value="Mitogen-activated protein kinase"/>
    <property type="match status" value="1"/>
</dbReference>
<dbReference type="FunFam" id="3.30.200.20:FF:000210">
    <property type="entry name" value="Mitogen-activated protein kinase"/>
    <property type="match status" value="1"/>
</dbReference>
<dbReference type="Gene3D" id="3.30.200.20">
    <property type="entry name" value="Phosphorylase Kinase, domain 1"/>
    <property type="match status" value="1"/>
</dbReference>
<dbReference type="Gene3D" id="1.10.510.10">
    <property type="entry name" value="Transferase(Phosphotransferase) domain 1"/>
    <property type="match status" value="1"/>
</dbReference>
<dbReference type="InterPro" id="IPR011009">
    <property type="entry name" value="Kinase-like_dom_sf"/>
</dbReference>
<dbReference type="InterPro" id="IPR050117">
    <property type="entry name" value="MAP_kinase"/>
</dbReference>
<dbReference type="InterPro" id="IPR003527">
    <property type="entry name" value="MAP_kinase_CS"/>
</dbReference>
<dbReference type="InterPro" id="IPR008351">
    <property type="entry name" value="MAPK_JNK"/>
</dbReference>
<dbReference type="InterPro" id="IPR000719">
    <property type="entry name" value="Prot_kinase_dom"/>
</dbReference>
<dbReference type="InterPro" id="IPR008271">
    <property type="entry name" value="Ser/Thr_kinase_AS"/>
</dbReference>
<dbReference type="PANTHER" id="PTHR24055">
    <property type="entry name" value="MITOGEN-ACTIVATED PROTEIN KINASE"/>
    <property type="match status" value="1"/>
</dbReference>
<dbReference type="Pfam" id="PF00069">
    <property type="entry name" value="Pkinase"/>
    <property type="match status" value="1"/>
</dbReference>
<dbReference type="PRINTS" id="PR01772">
    <property type="entry name" value="JNKMAPKINASE"/>
</dbReference>
<dbReference type="SMART" id="SM00220">
    <property type="entry name" value="S_TKc"/>
    <property type="match status" value="1"/>
</dbReference>
<dbReference type="SUPFAM" id="SSF56112">
    <property type="entry name" value="Protein kinase-like (PK-like)"/>
    <property type="match status" value="1"/>
</dbReference>
<dbReference type="PROSITE" id="PS01351">
    <property type="entry name" value="MAPK"/>
    <property type="match status" value="1"/>
</dbReference>
<dbReference type="PROSITE" id="PS50011">
    <property type="entry name" value="PROTEIN_KINASE_DOM"/>
    <property type="match status" value="1"/>
</dbReference>
<dbReference type="PROSITE" id="PS00108">
    <property type="entry name" value="PROTEIN_KINASE_ST"/>
    <property type="match status" value="1"/>
</dbReference>
<feature type="chain" id="PRO_0000186271" description="Stress-activated protein kinase JNK">
    <location>
        <begin position="1"/>
        <end position="372"/>
    </location>
</feature>
<feature type="domain" description="Protein kinase" evidence="2">
    <location>
        <begin position="24"/>
        <end position="320"/>
    </location>
</feature>
<feature type="short sequence motif" description="TXY">
    <location>
        <begin position="181"/>
        <end position="183"/>
    </location>
</feature>
<feature type="active site" description="Proton acceptor" evidence="2 3">
    <location>
        <position position="149"/>
    </location>
</feature>
<feature type="binding site" evidence="2">
    <location>
        <begin position="31"/>
        <end position="36"/>
    </location>
    <ligand>
        <name>ATP</name>
        <dbReference type="ChEBI" id="CHEBI:30616"/>
    </ligand>
</feature>
<feature type="binding site" evidence="2">
    <location>
        <position position="53"/>
    </location>
    <ligand>
        <name>ATP</name>
        <dbReference type="ChEBI" id="CHEBI:30616"/>
    </ligand>
</feature>
<feature type="modified residue" description="Phosphothreonine" evidence="6">
    <location>
        <position position="181"/>
    </location>
</feature>
<feature type="modified residue" description="Phosphotyrosine" evidence="6">
    <location>
        <position position="183"/>
    </location>
</feature>
<feature type="mutagenesis site" description="In BSK-1; defect in dorsal closure." evidence="14">
    <original>G</original>
    <variation>E</variation>
    <location>
        <position position="225"/>
    </location>
</feature>
<feature type="mutagenesis site" description="In BSK-2; defect in dorsal closure." evidence="14">
    <location>
        <begin position="316"/>
        <end position="372"/>
    </location>
</feature>
<feature type="sequence conflict" description="In Ref. 2; AAC47325." evidence="16" ref="2">
    <original>APAPEPYDHSVDEREHTVEQWKELIYEEVMDYEAHNTNNRTR</original>
    <variation>RPLRSHMITAWTKGNTLWSSGRS</variation>
    <location>
        <begin position="331"/>
        <end position="372"/>
    </location>
</feature>
<feature type="strand" evidence="18">
    <location>
        <begin position="8"/>
        <end position="13"/>
    </location>
</feature>
<feature type="strand" evidence="18">
    <location>
        <begin position="16"/>
        <end position="21"/>
    </location>
</feature>
<feature type="strand" evidence="18">
    <location>
        <begin position="24"/>
        <end position="29"/>
    </location>
</feature>
<feature type="strand" evidence="18">
    <location>
        <begin position="38"/>
        <end position="43"/>
    </location>
</feature>
<feature type="turn" evidence="18">
    <location>
        <begin position="44"/>
        <end position="47"/>
    </location>
</feature>
<feature type="strand" evidence="18">
    <location>
        <begin position="48"/>
        <end position="56"/>
    </location>
</feature>
<feature type="helix" evidence="18">
    <location>
        <begin position="62"/>
        <end position="77"/>
    </location>
</feature>
<feature type="strand" evidence="18">
    <location>
        <begin position="87"/>
        <end position="90"/>
    </location>
</feature>
<feature type="strand" evidence="18">
    <location>
        <begin position="93"/>
        <end position="95"/>
    </location>
</feature>
<feature type="turn" evidence="18">
    <location>
        <begin position="96"/>
        <end position="98"/>
    </location>
</feature>
<feature type="strand" evidence="18">
    <location>
        <begin position="101"/>
        <end position="107"/>
    </location>
</feature>
<feature type="strand" evidence="18">
    <location>
        <begin position="110"/>
        <end position="112"/>
    </location>
</feature>
<feature type="helix" evidence="18">
    <location>
        <begin position="113"/>
        <end position="118"/>
    </location>
</feature>
<feature type="helix" evidence="18">
    <location>
        <begin position="123"/>
        <end position="142"/>
    </location>
</feature>
<feature type="helix" evidence="18">
    <location>
        <begin position="152"/>
        <end position="154"/>
    </location>
</feature>
<feature type="strand" evidence="18">
    <location>
        <begin position="155"/>
        <end position="157"/>
    </location>
</feature>
<feature type="strand" evidence="18">
    <location>
        <begin position="163"/>
        <end position="165"/>
    </location>
</feature>
<feature type="helix" evidence="18">
    <location>
        <begin position="192"/>
        <end position="195"/>
    </location>
</feature>
<feature type="helix" evidence="18">
    <location>
        <begin position="204"/>
        <end position="218"/>
    </location>
</feature>
<feature type="helix" evidence="18">
    <location>
        <begin position="228"/>
        <end position="239"/>
    </location>
</feature>
<feature type="helix" evidence="18">
    <location>
        <begin position="244"/>
        <end position="248"/>
    </location>
</feature>
<feature type="helix" evidence="18">
    <location>
        <begin position="252"/>
        <end position="259"/>
    </location>
</feature>
<feature type="helix" evidence="18">
    <location>
        <begin position="269"/>
        <end position="272"/>
    </location>
</feature>
<feature type="helix" evidence="18">
    <location>
        <begin position="275"/>
        <end position="277"/>
    </location>
</feature>
<feature type="helix" evidence="18">
    <location>
        <begin position="285"/>
        <end position="300"/>
    </location>
</feature>
<feature type="helix" evidence="18">
    <location>
        <begin position="305"/>
        <end position="307"/>
    </location>
</feature>
<feature type="helix" evidence="18">
    <location>
        <begin position="311"/>
        <end position="316"/>
    </location>
</feature>
<feature type="turn" evidence="18">
    <location>
        <begin position="318"/>
        <end position="320"/>
    </location>
</feature>
<feature type="helix" evidence="18">
    <location>
        <begin position="321"/>
        <end position="323"/>
    </location>
</feature>
<feature type="helix" evidence="18">
    <location>
        <begin position="326"/>
        <end position="329"/>
    </location>
</feature>
<feature type="helix" evidence="18">
    <location>
        <begin position="348"/>
        <end position="361"/>
    </location>
</feature>
<comment type="function">
    <text evidence="4 5 7 8 10 11 12 13 15">Mitogen-activated protein kinase and key component of the c-Jun N-terminal kinase (JNK) pathway which phosphorylate and activate transcription factors involved in a wide range of biological processes including response to various stresses, cellular proliferation, differentiation and migration, and regulation of cell shape (PubMed:10433922, PubMed:11784101, PubMed:22227521, PubMed:25594180, PubMed:28396149, PubMed:37138087, PubMed:8946915, PubMed:9224720). Responds to activation by environmental stress by phosphorylating a number of transcription factors, primarily components of AP-1 such as Jra and also the transcriptional repressor aop, and thus regulates transcriptional activity (PubMed:9224720). Component of the immune response activated by bacterial infection, and is involved in wound healing and in dorsal closure, a morphogenetic movement during embryogenesis (PubMed:10433922, PubMed:11784101, PubMed:8946915, PubMed:9224720). Functions in the systematic response to wounding acting downstream of the Hayan-phenoloxidase PPO1 cascade (PubMed:22227521). During epidermal wound healing involved in cellular polarization by inducing the translocation of sktl and mys/integrin beta to the trailing edge (PubMed:31704968). Exhibits cytoprotective activity in neuronal cells in response to wounding to the integument (PubMed:22227521). Controls the expression of a phosphatase, puckered, at the edges of wounded epidermal tissue and in the dorsal epithelium during dorsal closure (PubMed:10433922, PubMed:11784101). Regulates the activity of SREBP in neurons and thereby the accumulation of lipids in glia (PubMed:25594180). Plays a role in positively regulating the expression of DIP2 independently of AP-1, thereby ensuring proper axon guidance in mushroom bodies (PubMed:28396149). In enterocytes and differentiating progenitors of the gut that are experiencing inorganic phosphate (Pi) deficiency, activated by Cka to induce nearby progenitor cells to proliferate and form new absorptive cells, probably helping the organism to cope with the nutrient deficiency by maximizing absorption of dietary Pi (PubMed:37138087).</text>
</comment>
<comment type="catalytic activity">
    <reaction>
        <text>L-seryl-[protein] + ATP = O-phospho-L-seryl-[protein] + ADP + H(+)</text>
        <dbReference type="Rhea" id="RHEA:17989"/>
        <dbReference type="Rhea" id="RHEA-COMP:9863"/>
        <dbReference type="Rhea" id="RHEA-COMP:11604"/>
        <dbReference type="ChEBI" id="CHEBI:15378"/>
        <dbReference type="ChEBI" id="CHEBI:29999"/>
        <dbReference type="ChEBI" id="CHEBI:30616"/>
        <dbReference type="ChEBI" id="CHEBI:83421"/>
        <dbReference type="ChEBI" id="CHEBI:456216"/>
        <dbReference type="EC" id="2.7.11.24"/>
    </reaction>
</comment>
<comment type="catalytic activity">
    <reaction>
        <text>L-threonyl-[protein] + ATP = O-phospho-L-threonyl-[protein] + ADP + H(+)</text>
        <dbReference type="Rhea" id="RHEA:46608"/>
        <dbReference type="Rhea" id="RHEA-COMP:11060"/>
        <dbReference type="Rhea" id="RHEA-COMP:11605"/>
        <dbReference type="ChEBI" id="CHEBI:15378"/>
        <dbReference type="ChEBI" id="CHEBI:30013"/>
        <dbReference type="ChEBI" id="CHEBI:30616"/>
        <dbReference type="ChEBI" id="CHEBI:61977"/>
        <dbReference type="ChEBI" id="CHEBI:456216"/>
        <dbReference type="EC" id="2.7.11.24"/>
    </reaction>
</comment>
<comment type="cofactor">
    <cofactor evidence="1">
        <name>Mg(2+)</name>
        <dbReference type="ChEBI" id="CHEBI:18420"/>
    </cofactor>
</comment>
<comment type="activity regulation">
    <text evidence="4">Activated by threonine and tyrosine phosphorylation by the dual specificity kinase, hep. Inhibited by dual specificity phosphatase, puckered.</text>
</comment>
<comment type="subunit">
    <text evidence="6">Interacts with MKP-4 (via tyrosine-protein phosphatase domain); the interaction dephosphorylates bsk.</text>
</comment>
<comment type="subcellular location">
    <subcellularLocation>
        <location evidence="6 9">Nucleus</location>
    </subcellularLocation>
    <subcellularLocation>
        <location evidence="6">Cytoplasm</location>
    </subcellularLocation>
</comment>
<comment type="tissue specificity">
    <text evidence="13 14">During gastrulation, expression is seen in cells undergoing morphogenetic movements. By stage 9 of embryonic development, expression is ubiquitous. At stages 12-14, expression occurs in epidermis and central nervous system. At stage 15, expression is restricted to ventral nerve cord, brain and some peripheral neurons. In larvae, expression is seen in all imaginal disks, with highest levels in wing and eye disks, and in the CNS. Adults express the protein in fat body and hemocytes.</text>
</comment>
<comment type="developmental stage">
    <text evidence="13">Expressed maternally and zygotically through to adult (male and female).</text>
</comment>
<comment type="induction">
    <text evidence="7 8">In neuronal cells by wounding of the integument (at protein level) (PubMed:22227521). Activated by increased levels of reactive oxygen species (ROS) (PubMed:25594180).</text>
</comment>
<comment type="domain">
    <text>The TXY motif contains the threonine and tyrosine residues whose phosphorylation activates the MAP kinases.</text>
</comment>
<comment type="PTM">
    <text evidence="6">Dually phosphorylated on Thr-181 and Tyr-183, which activates the enzyme.</text>
</comment>
<comment type="disruption phenotype">
    <text evidence="10">RNAi-mediated knockdown results in reduced levels of DIP2.</text>
</comment>
<comment type="similarity">
    <text evidence="16">Belongs to the protein kinase superfamily. CMGC Ser/Thr protein kinase family. MAP kinase subfamily.</text>
</comment>
<comment type="sequence caution" evidence="16">
    <conflict type="frameshift">
        <sequence resource="EMBL-CDS" id="AAC47325"/>
    </conflict>
</comment>
<gene>
    <name evidence="17" type="primary">bsk</name>
    <name evidence="17" type="synonym">JNK</name>
    <name evidence="17" type="ORF">CG5680</name>
</gene>
<keyword id="KW-0002">3D-structure</keyword>
<keyword id="KW-0067">ATP-binding</keyword>
<keyword id="KW-0963">Cytoplasm</keyword>
<keyword id="KW-0217">Developmental protein</keyword>
<keyword id="KW-0418">Kinase</keyword>
<keyword id="KW-0547">Nucleotide-binding</keyword>
<keyword id="KW-0539">Nucleus</keyword>
<keyword id="KW-0597">Phosphoprotein</keyword>
<keyword id="KW-1185">Reference proteome</keyword>
<keyword id="KW-0723">Serine/threonine-protein kinase</keyword>
<keyword id="KW-0808">Transferase</keyword>
<organism>
    <name type="scientific">Drosophila melanogaster</name>
    <name type="common">Fruit fly</name>
    <dbReference type="NCBI Taxonomy" id="7227"/>
    <lineage>
        <taxon>Eukaryota</taxon>
        <taxon>Metazoa</taxon>
        <taxon>Ecdysozoa</taxon>
        <taxon>Arthropoda</taxon>
        <taxon>Hexapoda</taxon>
        <taxon>Insecta</taxon>
        <taxon>Pterygota</taxon>
        <taxon>Neoptera</taxon>
        <taxon>Endopterygota</taxon>
        <taxon>Diptera</taxon>
        <taxon>Brachycera</taxon>
        <taxon>Muscomorpha</taxon>
        <taxon>Ephydroidea</taxon>
        <taxon>Drosophilidae</taxon>
        <taxon>Drosophila</taxon>
        <taxon>Sophophora</taxon>
    </lineage>
</organism>
<sequence length="372" mass="43027">MTTAQHQHYTVEVGDTNFTIHSRYINLRPIGSGAQGIVCAAYDTITQQNVAIKKLSRPFQNVTHAKRAYREFKLMKLVNHKNIIGLLNAFTPQRNLEEFQDVYLVMELMDANLCQVIQMDLDHDRMSYLLYQMLCGIKHLHSAGIIHRDLKPSNIVVKADCTLKILDFGLARTAGTTFMMTPYVVTRYYRAPEVILGMGYTENVDIWSVGCIMGEMIRGGVLFPGTDHIDQWNKIIEQLGTPSPSFMQRLQPTVRNYVENRPRYTGYSFDRLFPDGLFPNDNNQNSRRKASDARNLLSKMLVIDPEQRISVDEALKHEYINVWYDAEEVDAPAPEPYDHSVDEREHTVEQWKELIYEEVMDYEAHNTNNRTR</sequence>
<accession>P92208</accession>
<accession>O01366</accession>
<accession>Q94542</accession>
<name>JNK_DROME</name>
<reference key="1">
    <citation type="journal article" date="1996" name="Genes Dev.">
        <title>A JNK signal transduction pathway that mediates morphogenesis and an immune response in Drosophila.</title>
        <authorList>
            <person name="Sluss H.K."/>
            <person name="Han Z."/>
            <person name="Barrett T."/>
            <person name="Davis R.J."/>
            <person name="Ip Y.T."/>
        </authorList>
    </citation>
    <scope>NUCLEOTIDE SEQUENCE [GENOMIC DNA]</scope>
    <scope>FUNCTION</scope>
    <scope>DEVELOPMENTAL STAGE</scope>
    <scope>TISSUE SPECIFICITY</scope>
    <source>
        <tissue>Embryo</tissue>
    </source>
</reference>
<reference key="2">
    <citation type="journal article" date="1996" name="Genes Dev.">
        <title>The Drosophila Jun-N-terminal kinase is required for cell morphogenesis but not for DJun-dependent cell fate specification in the eye.</title>
        <authorList>
            <person name="Riesgo-Escovar J.R."/>
            <person name="Jenni M."/>
            <person name="Fritz A."/>
            <person name="Hafen E."/>
        </authorList>
    </citation>
    <scope>NUCLEOTIDE SEQUENCE [MRNA]</scope>
    <scope>MUTAGENESIS</scope>
    <scope>TISSUE SPECIFICITY</scope>
    <source>
        <strain>Oregon-R</strain>
        <tissue>Embryo</tissue>
    </source>
</reference>
<reference key="3">
    <citation type="journal article" date="2000" name="Science">
        <title>The genome sequence of Drosophila melanogaster.</title>
        <authorList>
            <person name="Adams M.D."/>
            <person name="Celniker S.E."/>
            <person name="Holt R.A."/>
            <person name="Evans C.A."/>
            <person name="Gocayne J.D."/>
            <person name="Amanatides P.G."/>
            <person name="Scherer S.E."/>
            <person name="Li P.W."/>
            <person name="Hoskins R.A."/>
            <person name="Galle R.F."/>
            <person name="George R.A."/>
            <person name="Lewis S.E."/>
            <person name="Richards S."/>
            <person name="Ashburner M."/>
            <person name="Henderson S.N."/>
            <person name="Sutton G.G."/>
            <person name="Wortman J.R."/>
            <person name="Yandell M.D."/>
            <person name="Zhang Q."/>
            <person name="Chen L.X."/>
            <person name="Brandon R.C."/>
            <person name="Rogers Y.-H.C."/>
            <person name="Blazej R.G."/>
            <person name="Champe M."/>
            <person name="Pfeiffer B.D."/>
            <person name="Wan K.H."/>
            <person name="Doyle C."/>
            <person name="Baxter E.G."/>
            <person name="Helt G."/>
            <person name="Nelson C.R."/>
            <person name="Miklos G.L.G."/>
            <person name="Abril J.F."/>
            <person name="Agbayani A."/>
            <person name="An H.-J."/>
            <person name="Andrews-Pfannkoch C."/>
            <person name="Baldwin D."/>
            <person name="Ballew R.M."/>
            <person name="Basu A."/>
            <person name="Baxendale J."/>
            <person name="Bayraktaroglu L."/>
            <person name="Beasley E.M."/>
            <person name="Beeson K.Y."/>
            <person name="Benos P.V."/>
            <person name="Berman B.P."/>
            <person name="Bhandari D."/>
            <person name="Bolshakov S."/>
            <person name="Borkova D."/>
            <person name="Botchan M.R."/>
            <person name="Bouck J."/>
            <person name="Brokstein P."/>
            <person name="Brottier P."/>
            <person name="Burtis K.C."/>
            <person name="Busam D.A."/>
            <person name="Butler H."/>
            <person name="Cadieu E."/>
            <person name="Center A."/>
            <person name="Chandra I."/>
            <person name="Cherry J.M."/>
            <person name="Cawley S."/>
            <person name="Dahlke C."/>
            <person name="Davenport L.B."/>
            <person name="Davies P."/>
            <person name="de Pablos B."/>
            <person name="Delcher A."/>
            <person name="Deng Z."/>
            <person name="Mays A.D."/>
            <person name="Dew I."/>
            <person name="Dietz S.M."/>
            <person name="Dodson K."/>
            <person name="Doup L.E."/>
            <person name="Downes M."/>
            <person name="Dugan-Rocha S."/>
            <person name="Dunkov B.C."/>
            <person name="Dunn P."/>
            <person name="Durbin K.J."/>
            <person name="Evangelista C.C."/>
            <person name="Ferraz C."/>
            <person name="Ferriera S."/>
            <person name="Fleischmann W."/>
            <person name="Fosler C."/>
            <person name="Gabrielian A.E."/>
            <person name="Garg N.S."/>
            <person name="Gelbart W.M."/>
            <person name="Glasser K."/>
            <person name="Glodek A."/>
            <person name="Gong F."/>
            <person name="Gorrell J.H."/>
            <person name="Gu Z."/>
            <person name="Guan P."/>
            <person name="Harris M."/>
            <person name="Harris N.L."/>
            <person name="Harvey D.A."/>
            <person name="Heiman T.J."/>
            <person name="Hernandez J.R."/>
            <person name="Houck J."/>
            <person name="Hostin D."/>
            <person name="Houston K.A."/>
            <person name="Howland T.J."/>
            <person name="Wei M.-H."/>
            <person name="Ibegwam C."/>
            <person name="Jalali M."/>
            <person name="Kalush F."/>
            <person name="Karpen G.H."/>
            <person name="Ke Z."/>
            <person name="Kennison J.A."/>
            <person name="Ketchum K.A."/>
            <person name="Kimmel B.E."/>
            <person name="Kodira C.D."/>
            <person name="Kraft C.L."/>
            <person name="Kravitz S."/>
            <person name="Kulp D."/>
            <person name="Lai Z."/>
            <person name="Lasko P."/>
            <person name="Lei Y."/>
            <person name="Levitsky A.A."/>
            <person name="Li J.H."/>
            <person name="Li Z."/>
            <person name="Liang Y."/>
            <person name="Lin X."/>
            <person name="Liu X."/>
            <person name="Mattei B."/>
            <person name="McIntosh T.C."/>
            <person name="McLeod M.P."/>
            <person name="McPherson D."/>
            <person name="Merkulov G."/>
            <person name="Milshina N.V."/>
            <person name="Mobarry C."/>
            <person name="Morris J."/>
            <person name="Moshrefi A."/>
            <person name="Mount S.M."/>
            <person name="Moy M."/>
            <person name="Murphy B."/>
            <person name="Murphy L."/>
            <person name="Muzny D.M."/>
            <person name="Nelson D.L."/>
            <person name="Nelson D.R."/>
            <person name="Nelson K.A."/>
            <person name="Nixon K."/>
            <person name="Nusskern D.R."/>
            <person name="Pacleb J.M."/>
            <person name="Palazzolo M."/>
            <person name="Pittman G.S."/>
            <person name="Pan S."/>
            <person name="Pollard J."/>
            <person name="Puri V."/>
            <person name="Reese M.G."/>
            <person name="Reinert K."/>
            <person name="Remington K."/>
            <person name="Saunders R.D.C."/>
            <person name="Scheeler F."/>
            <person name="Shen H."/>
            <person name="Shue B.C."/>
            <person name="Siden-Kiamos I."/>
            <person name="Simpson M."/>
            <person name="Skupski M.P."/>
            <person name="Smith T.J."/>
            <person name="Spier E."/>
            <person name="Spradling A.C."/>
            <person name="Stapleton M."/>
            <person name="Strong R."/>
            <person name="Sun E."/>
            <person name="Svirskas R."/>
            <person name="Tector C."/>
            <person name="Turner R."/>
            <person name="Venter E."/>
            <person name="Wang A.H."/>
            <person name="Wang X."/>
            <person name="Wang Z.-Y."/>
            <person name="Wassarman D.A."/>
            <person name="Weinstock G.M."/>
            <person name="Weissenbach J."/>
            <person name="Williams S.M."/>
            <person name="Woodage T."/>
            <person name="Worley K.C."/>
            <person name="Wu D."/>
            <person name="Yang S."/>
            <person name="Yao Q.A."/>
            <person name="Ye J."/>
            <person name="Yeh R.-F."/>
            <person name="Zaveri J.S."/>
            <person name="Zhan M."/>
            <person name="Zhang G."/>
            <person name="Zhao Q."/>
            <person name="Zheng L."/>
            <person name="Zheng X.H."/>
            <person name="Zhong F.N."/>
            <person name="Zhong W."/>
            <person name="Zhou X."/>
            <person name="Zhu S.C."/>
            <person name="Zhu X."/>
            <person name="Smith H.O."/>
            <person name="Gibbs R.A."/>
            <person name="Myers E.W."/>
            <person name="Rubin G.M."/>
            <person name="Venter J.C."/>
        </authorList>
    </citation>
    <scope>NUCLEOTIDE SEQUENCE [LARGE SCALE GENOMIC DNA]</scope>
    <source>
        <strain>Berkeley</strain>
    </source>
</reference>
<reference key="4">
    <citation type="journal article" date="2002" name="Genome Biol.">
        <title>Annotation of the Drosophila melanogaster euchromatic genome: a systematic review.</title>
        <authorList>
            <person name="Misra S."/>
            <person name="Crosby M.A."/>
            <person name="Mungall C.J."/>
            <person name="Matthews B.B."/>
            <person name="Campbell K.S."/>
            <person name="Hradecky P."/>
            <person name="Huang Y."/>
            <person name="Kaminker J.S."/>
            <person name="Millburn G.H."/>
            <person name="Prochnik S.E."/>
            <person name="Smith C.D."/>
            <person name="Tupy J.L."/>
            <person name="Whitfield E.J."/>
            <person name="Bayraktaroglu L."/>
            <person name="Berman B.P."/>
            <person name="Bettencourt B.R."/>
            <person name="Celniker S.E."/>
            <person name="de Grey A.D.N.J."/>
            <person name="Drysdale R.A."/>
            <person name="Harris N.L."/>
            <person name="Richter J."/>
            <person name="Russo S."/>
            <person name="Schroeder A.J."/>
            <person name="Shu S.Q."/>
            <person name="Stapleton M."/>
            <person name="Yamada C."/>
            <person name="Ashburner M."/>
            <person name="Gelbart W.M."/>
            <person name="Rubin G.M."/>
            <person name="Lewis S.E."/>
        </authorList>
    </citation>
    <scope>GENOME REANNOTATION</scope>
    <source>
        <strain>Berkeley</strain>
    </source>
</reference>
<reference key="5">
    <citation type="journal article" date="2002" name="Genome Biol.">
        <title>A Drosophila full-length cDNA resource.</title>
        <authorList>
            <person name="Stapleton M."/>
            <person name="Carlson J.W."/>
            <person name="Brokstein P."/>
            <person name="Yu C."/>
            <person name="Champe M."/>
            <person name="George R.A."/>
            <person name="Guarin H."/>
            <person name="Kronmiller B."/>
            <person name="Pacleb J.M."/>
            <person name="Park S."/>
            <person name="Wan K.H."/>
            <person name="Rubin G.M."/>
            <person name="Celniker S.E."/>
        </authorList>
    </citation>
    <scope>NUCLEOTIDE SEQUENCE [LARGE SCALE MRNA]</scope>
    <source>
        <strain>Berkeley</strain>
        <tissue>Embryo</tissue>
        <tissue>Head</tissue>
    </source>
</reference>
<reference key="6">
    <citation type="journal article" date="1997" name="Genes Dev.">
        <title>Drosophila Jun kinase regulates expression of decapentaplegic via the ETS-domain protein Aop and the AP-1 transcription factor DJun during dorsal closure.</title>
        <authorList>
            <person name="Riesgo-Escovar J.R."/>
            <person name="Hafen E."/>
        </authorList>
    </citation>
    <scope>FUNCTION</scope>
</reference>
<reference key="7">
    <citation type="journal article" date="1999" name="Development">
        <title>Thorax closure in Drosophila: involvement of Fos and the JNK pathway.</title>
        <authorList>
            <person name="Zeitlinger J."/>
            <person name="Bohmann D."/>
        </authorList>
    </citation>
    <scope>FUNCTION</scope>
    <scope>ACTIVITY REGULATION</scope>
</reference>
<reference key="8">
    <citation type="journal article" date="2002" name="Dev. Biol.">
        <title>JNK signaling pathway is required for efficient wound healing in Drosophila.</title>
        <authorList>
            <person name="Raemet M."/>
            <person name="Lanot R."/>
            <person name="Zachary D."/>
            <person name="Manfruelli P."/>
        </authorList>
    </citation>
    <scope>FUNCTION</scope>
</reference>
<reference key="9">
    <citation type="journal article" date="2008" name="Cell. Signal.">
        <title>Molecular identification and functional characterization of a Drosophila dual-specificity phosphatase DMKP-4 which is involved in PGN-induced activation of the JNK pathway.</title>
        <authorList>
            <person name="Sun L."/>
            <person name="Yu M.C."/>
            <person name="Kong L."/>
            <person name="Zhuang Z.H."/>
            <person name="Hu J.H."/>
            <person name="Ge B.X."/>
        </authorList>
    </citation>
    <scope>INTERACTION WITH MKP-4</scope>
    <scope>SUBCELLULAR LOCATION</scope>
    <scope>PHOSPHORYLATION AT THR-181 AND TYR-183</scope>
</reference>
<reference key="10">
    <citation type="journal article" date="2012" name="EMBO J.">
        <title>Genetic evidence of a redox-dependent systemic wound response via Hayan protease-phenoloxidase system in Drosophila.</title>
        <authorList>
            <person name="Nam H.J."/>
            <person name="Jang I.H."/>
            <person name="You H."/>
            <person name="Lee K.A."/>
            <person name="Lee W.J."/>
        </authorList>
    </citation>
    <scope>FUNCTION</scope>
    <scope>INDUCTION BY WOUNDING</scope>
</reference>
<reference key="11">
    <citation type="journal article" date="2015" name="Biol. Open">
        <title>The Drosophila TIPE family member Sigmar interacts with the Ste20-like kinase Misshapen and modulates JNK signaling, cytoskeletal remodeling and autophagy.</title>
        <authorList>
            <person name="Chittaranjan S."/>
            <person name="Xu J."/>
            <person name="Kuzyk M."/>
            <person name="Dullat H.K."/>
            <person name="Wilton J."/>
            <person name="DeVorkin L."/>
            <person name="Lebovitz C."/>
            <person name="Morin G.B."/>
            <person name="Marra M.A."/>
            <person name="Gorski S.M."/>
        </authorList>
    </citation>
    <scope>SUBCELLULAR LOCATION</scope>
</reference>
<reference key="12">
    <citation type="journal article" date="2015" name="Cell">
        <title>Glial lipid droplets and ROS induced by mitochondrial defects promote neurodegeneration.</title>
        <authorList>
            <person name="Liu L."/>
            <person name="Zhang K."/>
            <person name="Sandoval H."/>
            <person name="Yamamoto S."/>
            <person name="Jaiswal M."/>
            <person name="Sanz E."/>
            <person name="Li Z."/>
            <person name="Hui J."/>
            <person name="Graham B.H."/>
            <person name="Quintana A."/>
            <person name="Bellen H.J."/>
        </authorList>
    </citation>
    <scope>FUNCTION</scope>
    <scope>INDUCTION BY REACTIVE OXYGEN SPECIES</scope>
</reference>
<reference key="13">
    <citation type="journal article" date="2017" name="Biochem. Biophys. Res. Commun.">
        <title>DISCO interacting protein 2 determines direction of axon projection under the regulation of c-Jun N-terminal kinase in the Drosophila mushroom body.</title>
        <authorList>
            <person name="Nitta Y."/>
            <person name="Sugie A."/>
        </authorList>
    </citation>
    <scope>FUNCTION</scope>
    <scope>DISRUPTION PHENOTYPE</scope>
</reference>
<reference evidence="16" key="14">
    <citation type="journal article" date="2019" name="Sci. Rep.">
        <title>Interplay between integrins and PI4P5K Sktl is crucial for cell polarization and reepithelialisation during Drosophila wound healing.</title>
        <authorList>
            <person name="Park S.H."/>
            <person name="Lee C.W."/>
            <person name="Choe K.M."/>
        </authorList>
    </citation>
    <scope>FUNCTION</scope>
</reference>
<reference key="15">
    <citation type="journal article" date="2023" name="Nature">
        <title>A phosphate-sensing organelle regulates phosphate and tissue homeostasis.</title>
        <authorList>
            <person name="Xu C."/>
            <person name="Xu J."/>
            <person name="Tang H.W."/>
            <person name="Ericsson M."/>
            <person name="Weng J.H."/>
            <person name="DiRusso J."/>
            <person name="Hu Y."/>
            <person name="Ma W."/>
            <person name="Asara J.M."/>
            <person name="Perrimon N."/>
        </authorList>
    </citation>
    <scope>FUNCTION</scope>
</reference>
<evidence type="ECO:0000250" key="1"/>
<evidence type="ECO:0000255" key="2">
    <source>
        <dbReference type="PROSITE-ProRule" id="PRU00159"/>
    </source>
</evidence>
<evidence type="ECO:0000255" key="3">
    <source>
        <dbReference type="PROSITE-ProRule" id="PRU10027"/>
    </source>
</evidence>
<evidence type="ECO:0000269" key="4">
    <source>
    </source>
</evidence>
<evidence type="ECO:0000269" key="5">
    <source>
    </source>
</evidence>
<evidence type="ECO:0000269" key="6">
    <source>
    </source>
</evidence>
<evidence type="ECO:0000269" key="7">
    <source>
    </source>
</evidence>
<evidence type="ECO:0000269" key="8">
    <source>
    </source>
</evidence>
<evidence type="ECO:0000269" key="9">
    <source>
    </source>
</evidence>
<evidence type="ECO:0000269" key="10">
    <source>
    </source>
</evidence>
<evidence type="ECO:0000269" key="11">
    <source>
    </source>
</evidence>
<evidence type="ECO:0000269" key="12">
    <source>
    </source>
</evidence>
<evidence type="ECO:0000269" key="13">
    <source>
    </source>
</evidence>
<evidence type="ECO:0000269" key="14">
    <source>
    </source>
</evidence>
<evidence type="ECO:0000269" key="15">
    <source>
    </source>
</evidence>
<evidence type="ECO:0000305" key="16"/>
<evidence type="ECO:0000312" key="17">
    <source>
        <dbReference type="FlyBase" id="FBgn0000229"/>
    </source>
</evidence>
<evidence type="ECO:0007829" key="18">
    <source>
        <dbReference type="PDB" id="5AWM"/>
    </source>
</evidence>